<sequence length="240" mass="26382">MGKTQSLPILITGGGRRIGLALAWHFINQKQPVIVSYRTHYPAIDGLIKAGAQCIQADFSTNDGVMAFADEVLKSTHGLRAILHNASAWMAEKPGAPLTDVLACMMQIHVNTPYLLNHALERLLRGHGHAASDIIHFTDYVVERGSDKHIAYAASKAALDNMTRSFARKLAPEVKVNSIAPSLILFNEHDDAEYRQQALNKSLMKTAPGEKEVIDLVDYLLTSCFVTGRSFPLDGGRHLR</sequence>
<evidence type="ECO:0000250" key="1">
    <source>
        <dbReference type="UniProtKB" id="P0AFS3"/>
    </source>
</evidence>
<evidence type="ECO:0000255" key="2">
    <source>
        <dbReference type="PROSITE-ProRule" id="PRU10001"/>
    </source>
</evidence>
<evidence type="ECO:0000305" key="3"/>
<comment type="function">
    <text evidence="1">Catalyzes the reduction of dihydromonapterin to tetrahydromonapterin. Also has lower activity with dihydrofolate.</text>
</comment>
<comment type="catalytic activity">
    <reaction evidence="1">
        <text>(6S)-5,6,7,8-tetrahydrofolate + NADP(+) = 7,8-dihydrofolate + NADPH + H(+)</text>
        <dbReference type="Rhea" id="RHEA:15009"/>
        <dbReference type="ChEBI" id="CHEBI:15378"/>
        <dbReference type="ChEBI" id="CHEBI:57451"/>
        <dbReference type="ChEBI" id="CHEBI:57453"/>
        <dbReference type="ChEBI" id="CHEBI:57783"/>
        <dbReference type="ChEBI" id="CHEBI:58349"/>
        <dbReference type="EC" id="1.5.1.3"/>
    </reaction>
</comment>
<comment type="catalytic activity">
    <reaction evidence="1">
        <text>7,8-dihydromonapterin + NADPH + H(+) = 5,6,7,8-tetrahydromonapterin + NADP(+)</text>
        <dbReference type="Rhea" id="RHEA:34847"/>
        <dbReference type="ChEBI" id="CHEBI:15378"/>
        <dbReference type="ChEBI" id="CHEBI:57783"/>
        <dbReference type="ChEBI" id="CHEBI:58349"/>
        <dbReference type="ChEBI" id="CHEBI:71175"/>
        <dbReference type="ChEBI" id="CHEBI:71177"/>
        <dbReference type="EC" id="1.5.1.50"/>
    </reaction>
</comment>
<comment type="similarity">
    <text evidence="3">Belongs to the short-chain dehydrogenases/reductases (SDR) family. FolM subfamily.</text>
</comment>
<keyword id="KW-0521">NADP</keyword>
<keyword id="KW-0554">One-carbon metabolism</keyword>
<keyword id="KW-0560">Oxidoreductase</keyword>
<gene>
    <name type="primary">folM</name>
    <name type="ordered locus">UTI89_C1794</name>
</gene>
<reference key="1">
    <citation type="journal article" date="2006" name="Proc. Natl. Acad. Sci. U.S.A.">
        <title>Identification of genes subject to positive selection in uropathogenic strains of Escherichia coli: a comparative genomics approach.</title>
        <authorList>
            <person name="Chen S.L."/>
            <person name="Hung C.-S."/>
            <person name="Xu J."/>
            <person name="Reigstad C.S."/>
            <person name="Magrini V."/>
            <person name="Sabo A."/>
            <person name="Blasiar D."/>
            <person name="Bieri T."/>
            <person name="Meyer R.R."/>
            <person name="Ozersky P."/>
            <person name="Armstrong J.R."/>
            <person name="Fulton R.S."/>
            <person name="Latreille J.P."/>
            <person name="Spieth J."/>
            <person name="Hooton T.M."/>
            <person name="Mardis E.R."/>
            <person name="Hultgren S.J."/>
            <person name="Gordon J.I."/>
        </authorList>
    </citation>
    <scope>NUCLEOTIDE SEQUENCE [LARGE SCALE GENOMIC DNA]</scope>
    <source>
        <strain>UTI89 / UPEC</strain>
    </source>
</reference>
<name>FOLM_ECOUT</name>
<feature type="chain" id="PRO_0000339392" description="Dihydromonapterin reductase">
    <location>
        <begin position="1"/>
        <end position="240"/>
    </location>
</feature>
<feature type="active site" description="Proton acceptor" evidence="2">
    <location>
        <position position="152"/>
    </location>
</feature>
<dbReference type="EC" id="1.5.1.50" evidence="1"/>
<dbReference type="EC" id="1.5.1.3" evidence="1"/>
<dbReference type="EMBL" id="CP000243">
    <property type="protein sequence ID" value="ABE07272.1"/>
    <property type="molecule type" value="Genomic_DNA"/>
</dbReference>
<dbReference type="RefSeq" id="WP_000520811.1">
    <property type="nucleotide sequence ID" value="NZ_CP064825.1"/>
</dbReference>
<dbReference type="SMR" id="Q1RBJ2"/>
<dbReference type="KEGG" id="eci:UTI89_C1794"/>
<dbReference type="HOGENOM" id="CLU_010194_1_3_6"/>
<dbReference type="Proteomes" id="UP000001952">
    <property type="component" value="Chromosome"/>
</dbReference>
<dbReference type="GO" id="GO:0004146">
    <property type="term" value="F:dihydrofolate reductase activity"/>
    <property type="evidence" value="ECO:0007669"/>
    <property type="project" value="UniProtKB-EC"/>
</dbReference>
<dbReference type="GO" id="GO:0006730">
    <property type="term" value="P:one-carbon metabolic process"/>
    <property type="evidence" value="ECO:0007669"/>
    <property type="project" value="UniProtKB-KW"/>
</dbReference>
<dbReference type="CDD" id="cd05357">
    <property type="entry name" value="PR_SDR_c"/>
    <property type="match status" value="1"/>
</dbReference>
<dbReference type="FunFam" id="3.40.50.720:FF:000225">
    <property type="entry name" value="Dihydrofolate reductase FolM"/>
    <property type="match status" value="1"/>
</dbReference>
<dbReference type="Gene3D" id="3.40.50.720">
    <property type="entry name" value="NAD(P)-binding Rossmann-like Domain"/>
    <property type="match status" value="1"/>
</dbReference>
<dbReference type="InterPro" id="IPR036291">
    <property type="entry name" value="NAD(P)-bd_dom_sf"/>
</dbReference>
<dbReference type="InterPro" id="IPR020904">
    <property type="entry name" value="Sc_DH/Rdtase_CS"/>
</dbReference>
<dbReference type="InterPro" id="IPR002347">
    <property type="entry name" value="SDR_fam"/>
</dbReference>
<dbReference type="NCBIfam" id="NF005066">
    <property type="entry name" value="PRK06483.1"/>
    <property type="match status" value="1"/>
</dbReference>
<dbReference type="PANTHER" id="PTHR43639:SF6">
    <property type="entry name" value="DIHYDROMONAPTERIN REDUCTASE"/>
    <property type="match status" value="1"/>
</dbReference>
<dbReference type="PANTHER" id="PTHR43639">
    <property type="entry name" value="OXIDOREDUCTASE, SHORT-CHAIN DEHYDROGENASE/REDUCTASE FAMILY (AFU_ORTHOLOGUE AFUA_5G02870)"/>
    <property type="match status" value="1"/>
</dbReference>
<dbReference type="Pfam" id="PF13561">
    <property type="entry name" value="adh_short_C2"/>
    <property type="match status" value="1"/>
</dbReference>
<dbReference type="PRINTS" id="PR00081">
    <property type="entry name" value="GDHRDH"/>
</dbReference>
<dbReference type="SUPFAM" id="SSF51735">
    <property type="entry name" value="NAD(P)-binding Rossmann-fold domains"/>
    <property type="match status" value="1"/>
</dbReference>
<dbReference type="PROSITE" id="PS00061">
    <property type="entry name" value="ADH_SHORT"/>
    <property type="match status" value="1"/>
</dbReference>
<proteinExistence type="inferred from homology"/>
<accession>Q1RBJ2</accession>
<protein>
    <recommendedName>
        <fullName>Dihydromonapterin reductase</fullName>
        <shortName>H(2)-MPt reductase</shortName>
        <ecNumber evidence="1">1.5.1.50</ecNumber>
    </recommendedName>
    <alternativeName>
        <fullName>Dihydrofolate reductase</fullName>
        <shortName>DHFR</shortName>
        <ecNumber evidence="1">1.5.1.3</ecNumber>
    </alternativeName>
</protein>
<organism>
    <name type="scientific">Escherichia coli (strain UTI89 / UPEC)</name>
    <dbReference type="NCBI Taxonomy" id="364106"/>
    <lineage>
        <taxon>Bacteria</taxon>
        <taxon>Pseudomonadati</taxon>
        <taxon>Pseudomonadota</taxon>
        <taxon>Gammaproteobacteria</taxon>
        <taxon>Enterobacterales</taxon>
        <taxon>Enterobacteriaceae</taxon>
        <taxon>Escherichia</taxon>
    </lineage>
</organism>